<dbReference type="EC" id="7.1.1.-" evidence="1"/>
<dbReference type="EMBL" id="CP000316">
    <property type="protein sequence ID" value="ABE45162.1"/>
    <property type="molecule type" value="Genomic_DNA"/>
</dbReference>
<dbReference type="RefSeq" id="WP_011484157.1">
    <property type="nucleotide sequence ID" value="NC_007948.1"/>
</dbReference>
<dbReference type="SMR" id="Q127Y0"/>
<dbReference type="STRING" id="296591.Bpro_3248"/>
<dbReference type="KEGG" id="pol:Bpro_3248"/>
<dbReference type="eggNOG" id="COG1143">
    <property type="taxonomic scope" value="Bacteria"/>
</dbReference>
<dbReference type="HOGENOM" id="CLU_067218_5_1_4"/>
<dbReference type="OrthoDB" id="9808559at2"/>
<dbReference type="Proteomes" id="UP000001983">
    <property type="component" value="Chromosome"/>
</dbReference>
<dbReference type="GO" id="GO:0005886">
    <property type="term" value="C:plasma membrane"/>
    <property type="evidence" value="ECO:0007669"/>
    <property type="project" value="UniProtKB-SubCell"/>
</dbReference>
<dbReference type="GO" id="GO:0051539">
    <property type="term" value="F:4 iron, 4 sulfur cluster binding"/>
    <property type="evidence" value="ECO:0007669"/>
    <property type="project" value="UniProtKB-KW"/>
</dbReference>
<dbReference type="GO" id="GO:0005506">
    <property type="term" value="F:iron ion binding"/>
    <property type="evidence" value="ECO:0007669"/>
    <property type="project" value="UniProtKB-UniRule"/>
</dbReference>
<dbReference type="GO" id="GO:0050136">
    <property type="term" value="F:NADH:ubiquinone reductase (non-electrogenic) activity"/>
    <property type="evidence" value="ECO:0007669"/>
    <property type="project" value="UniProtKB-UniRule"/>
</dbReference>
<dbReference type="GO" id="GO:0048038">
    <property type="term" value="F:quinone binding"/>
    <property type="evidence" value="ECO:0007669"/>
    <property type="project" value="UniProtKB-KW"/>
</dbReference>
<dbReference type="GO" id="GO:0009060">
    <property type="term" value="P:aerobic respiration"/>
    <property type="evidence" value="ECO:0007669"/>
    <property type="project" value="TreeGrafter"/>
</dbReference>
<dbReference type="FunFam" id="3.30.70.3270:FF:000003">
    <property type="entry name" value="NADH-quinone oxidoreductase subunit I"/>
    <property type="match status" value="1"/>
</dbReference>
<dbReference type="Gene3D" id="3.30.70.3270">
    <property type="match status" value="1"/>
</dbReference>
<dbReference type="HAMAP" id="MF_01351">
    <property type="entry name" value="NDH1_NuoI"/>
    <property type="match status" value="1"/>
</dbReference>
<dbReference type="InterPro" id="IPR017896">
    <property type="entry name" value="4Fe4S_Fe-S-bd"/>
</dbReference>
<dbReference type="InterPro" id="IPR017900">
    <property type="entry name" value="4Fe4S_Fe_S_CS"/>
</dbReference>
<dbReference type="InterPro" id="IPR010226">
    <property type="entry name" value="NADH_quinone_OxRdtase_chainI"/>
</dbReference>
<dbReference type="NCBIfam" id="TIGR01971">
    <property type="entry name" value="NuoI"/>
    <property type="match status" value="1"/>
</dbReference>
<dbReference type="NCBIfam" id="NF004538">
    <property type="entry name" value="PRK05888.1-4"/>
    <property type="match status" value="1"/>
</dbReference>
<dbReference type="NCBIfam" id="NF004539">
    <property type="entry name" value="PRK05888.1-5"/>
    <property type="match status" value="1"/>
</dbReference>
<dbReference type="PANTHER" id="PTHR10849:SF20">
    <property type="entry name" value="NADH DEHYDROGENASE [UBIQUINONE] IRON-SULFUR PROTEIN 8, MITOCHONDRIAL"/>
    <property type="match status" value="1"/>
</dbReference>
<dbReference type="PANTHER" id="PTHR10849">
    <property type="entry name" value="NADH DEHYDROGENASE UBIQUINONE IRON-SULFUR PROTEIN 8, MITOCHONDRIAL"/>
    <property type="match status" value="1"/>
</dbReference>
<dbReference type="Pfam" id="PF12838">
    <property type="entry name" value="Fer4_7"/>
    <property type="match status" value="1"/>
</dbReference>
<dbReference type="SUPFAM" id="SSF54862">
    <property type="entry name" value="4Fe-4S ferredoxins"/>
    <property type="match status" value="1"/>
</dbReference>
<dbReference type="PROSITE" id="PS00198">
    <property type="entry name" value="4FE4S_FER_1"/>
    <property type="match status" value="2"/>
</dbReference>
<dbReference type="PROSITE" id="PS51379">
    <property type="entry name" value="4FE4S_FER_2"/>
    <property type="match status" value="2"/>
</dbReference>
<protein>
    <recommendedName>
        <fullName evidence="1">NADH-quinone oxidoreductase subunit I</fullName>
        <ecNumber evidence="1">7.1.1.-</ecNumber>
    </recommendedName>
    <alternativeName>
        <fullName evidence="1">NADH dehydrogenase I subunit I</fullName>
    </alternativeName>
    <alternativeName>
        <fullName evidence="1">NDH-1 subunit I</fullName>
    </alternativeName>
</protein>
<feature type="chain" id="PRO_0000298530" description="NADH-quinone oxidoreductase subunit I">
    <location>
        <begin position="1"/>
        <end position="165"/>
    </location>
</feature>
<feature type="domain" description="4Fe-4S ferredoxin-type 1" evidence="1">
    <location>
        <begin position="57"/>
        <end position="86"/>
    </location>
</feature>
<feature type="domain" description="4Fe-4S ferredoxin-type 2" evidence="1">
    <location>
        <begin position="96"/>
        <end position="125"/>
    </location>
</feature>
<feature type="binding site" evidence="1">
    <location>
        <position position="66"/>
    </location>
    <ligand>
        <name>[4Fe-4S] cluster</name>
        <dbReference type="ChEBI" id="CHEBI:49883"/>
        <label>1</label>
    </ligand>
</feature>
<feature type="binding site" evidence="1">
    <location>
        <position position="69"/>
    </location>
    <ligand>
        <name>[4Fe-4S] cluster</name>
        <dbReference type="ChEBI" id="CHEBI:49883"/>
        <label>1</label>
    </ligand>
</feature>
<feature type="binding site" evidence="1">
    <location>
        <position position="72"/>
    </location>
    <ligand>
        <name>[4Fe-4S] cluster</name>
        <dbReference type="ChEBI" id="CHEBI:49883"/>
        <label>1</label>
    </ligand>
</feature>
<feature type="binding site" evidence="1">
    <location>
        <position position="76"/>
    </location>
    <ligand>
        <name>[4Fe-4S] cluster</name>
        <dbReference type="ChEBI" id="CHEBI:49883"/>
        <label>2</label>
    </ligand>
</feature>
<feature type="binding site" evidence="1">
    <location>
        <position position="105"/>
    </location>
    <ligand>
        <name>[4Fe-4S] cluster</name>
        <dbReference type="ChEBI" id="CHEBI:49883"/>
        <label>2</label>
    </ligand>
</feature>
<feature type="binding site" evidence="1">
    <location>
        <position position="108"/>
    </location>
    <ligand>
        <name>[4Fe-4S] cluster</name>
        <dbReference type="ChEBI" id="CHEBI:49883"/>
        <label>2</label>
    </ligand>
</feature>
<feature type="binding site" evidence="1">
    <location>
        <position position="111"/>
    </location>
    <ligand>
        <name>[4Fe-4S] cluster</name>
        <dbReference type="ChEBI" id="CHEBI:49883"/>
        <label>2</label>
    </ligand>
</feature>
<feature type="binding site" evidence="1">
    <location>
        <position position="115"/>
    </location>
    <ligand>
        <name>[4Fe-4S] cluster</name>
        <dbReference type="ChEBI" id="CHEBI:49883"/>
        <label>1</label>
    </ligand>
</feature>
<comment type="function">
    <text evidence="1">NDH-1 shuttles electrons from NADH, via FMN and iron-sulfur (Fe-S) centers, to quinones in the respiratory chain. The immediate electron acceptor for the enzyme in this species is believed to be ubiquinone. Couples the redox reaction to proton translocation (for every two electrons transferred, four hydrogen ions are translocated across the cytoplasmic membrane), and thus conserves the redox energy in a proton gradient.</text>
</comment>
<comment type="catalytic activity">
    <reaction evidence="1">
        <text>a quinone + NADH + 5 H(+)(in) = a quinol + NAD(+) + 4 H(+)(out)</text>
        <dbReference type="Rhea" id="RHEA:57888"/>
        <dbReference type="ChEBI" id="CHEBI:15378"/>
        <dbReference type="ChEBI" id="CHEBI:24646"/>
        <dbReference type="ChEBI" id="CHEBI:57540"/>
        <dbReference type="ChEBI" id="CHEBI:57945"/>
        <dbReference type="ChEBI" id="CHEBI:132124"/>
    </reaction>
</comment>
<comment type="cofactor">
    <cofactor evidence="1">
        <name>[4Fe-4S] cluster</name>
        <dbReference type="ChEBI" id="CHEBI:49883"/>
    </cofactor>
    <text evidence="1">Binds 2 [4Fe-4S] clusters per subunit.</text>
</comment>
<comment type="subunit">
    <text evidence="1">NDH-1 is composed of 14 different subunits. Subunits NuoA, H, J, K, L, M, N constitute the membrane sector of the complex.</text>
</comment>
<comment type="subcellular location">
    <subcellularLocation>
        <location evidence="1">Cell inner membrane</location>
        <topology evidence="1">Peripheral membrane protein</topology>
    </subcellularLocation>
</comment>
<comment type="similarity">
    <text evidence="1">Belongs to the complex I 23 kDa subunit family.</text>
</comment>
<name>NUOI_POLSJ</name>
<evidence type="ECO:0000255" key="1">
    <source>
        <dbReference type="HAMAP-Rule" id="MF_01351"/>
    </source>
</evidence>
<sequence length="165" mass="18738">MSTVASVKDFVSSFMLTELFKGMALTGKYMFSRKITVQFPEEKTPLSPRFRGLHALRRYDNGEERCIACKLCEAVCPALAITIESEVRDDGSRRTSRYDIDLTKCIFCGFCEEACPVDAIVETHIFEYHGEKRGDLYFTKEMLLAVGDRYEAEIAANKAADAKYR</sequence>
<organism>
    <name type="scientific">Polaromonas sp. (strain JS666 / ATCC BAA-500)</name>
    <dbReference type="NCBI Taxonomy" id="296591"/>
    <lineage>
        <taxon>Bacteria</taxon>
        <taxon>Pseudomonadati</taxon>
        <taxon>Pseudomonadota</taxon>
        <taxon>Betaproteobacteria</taxon>
        <taxon>Burkholderiales</taxon>
        <taxon>Comamonadaceae</taxon>
        <taxon>Polaromonas</taxon>
    </lineage>
</organism>
<accession>Q127Y0</accession>
<keyword id="KW-0004">4Fe-4S</keyword>
<keyword id="KW-0997">Cell inner membrane</keyword>
<keyword id="KW-1003">Cell membrane</keyword>
<keyword id="KW-0408">Iron</keyword>
<keyword id="KW-0411">Iron-sulfur</keyword>
<keyword id="KW-0472">Membrane</keyword>
<keyword id="KW-0479">Metal-binding</keyword>
<keyword id="KW-0520">NAD</keyword>
<keyword id="KW-0874">Quinone</keyword>
<keyword id="KW-1185">Reference proteome</keyword>
<keyword id="KW-0677">Repeat</keyword>
<keyword id="KW-1278">Translocase</keyword>
<keyword id="KW-0830">Ubiquinone</keyword>
<reference key="1">
    <citation type="journal article" date="2008" name="Appl. Environ. Microbiol.">
        <title>The genome of Polaromonas sp. strain JS666: insights into the evolution of a hydrocarbon- and xenobiotic-degrading bacterium, and features of relevance to biotechnology.</title>
        <authorList>
            <person name="Mattes T.E."/>
            <person name="Alexander A.K."/>
            <person name="Richardson P.M."/>
            <person name="Munk A.C."/>
            <person name="Han C.S."/>
            <person name="Stothard P."/>
            <person name="Coleman N.V."/>
        </authorList>
    </citation>
    <scope>NUCLEOTIDE SEQUENCE [LARGE SCALE GENOMIC DNA]</scope>
    <source>
        <strain>JS666 / ATCC BAA-500</strain>
    </source>
</reference>
<proteinExistence type="inferred from homology"/>
<gene>
    <name evidence="1" type="primary">nuoI</name>
    <name type="ordered locus">Bpro_3248</name>
</gene>